<comment type="function">
    <text>2S seed storage protein.</text>
</comment>
<comment type="similarity">
    <text evidence="2">Belongs to the protease inhibitor I3 (leguminous Kunitz-type inhibitor) family.</text>
</comment>
<organism>
    <name type="scientific">Psophocarpus tetragonolobus</name>
    <name type="common">Winged bean</name>
    <name type="synonym">Dolichos tetragonolobus</name>
    <dbReference type="NCBI Taxonomy" id="3891"/>
    <lineage>
        <taxon>Eukaryota</taxon>
        <taxon>Viridiplantae</taxon>
        <taxon>Streptophyta</taxon>
        <taxon>Embryophyta</taxon>
        <taxon>Tracheophyta</taxon>
        <taxon>Spermatophyta</taxon>
        <taxon>Magnoliopsida</taxon>
        <taxon>eudicotyledons</taxon>
        <taxon>Gunneridae</taxon>
        <taxon>Pentapetalae</taxon>
        <taxon>rosids</taxon>
        <taxon>fabids</taxon>
        <taxon>Fabales</taxon>
        <taxon>Fabaceae</taxon>
        <taxon>Papilionoideae</taxon>
        <taxon>50 kb inversion clade</taxon>
        <taxon>NPAAA clade</taxon>
        <taxon>indigoferoid/millettioid clade</taxon>
        <taxon>Phaseoleae</taxon>
        <taxon>Psophocarpus</taxon>
    </lineage>
</organism>
<reference key="1">
    <citation type="journal article" date="1989" name="Eur. J. Biochem.">
        <title>Amino acid sequence of a crystalline seed albumin (winged bean albumin-1) from Psophocarpus tetragonolobus (L.) DC. Sequence similarity with Kunitz-type seed inhibitors and 7S storage globulins.</title>
        <authorList>
            <person name="Kortt A.A."/>
            <person name="Strike P.M."/>
            <person name="de Jersey J."/>
        </authorList>
    </citation>
    <scope>PROTEIN SEQUENCE</scope>
    <source>
        <strain>cv. TPT-1</strain>
        <tissue>Seed</tissue>
    </source>
</reference>
<reference key="2">
    <citation type="journal article" date="1987" name="J. Biol. Chem.">
        <title>Crystallization and preliminary crystallographic data of the major albumin from Psophocarpus tetragonolobus (L.) DC.</title>
        <authorList>
            <person name="Dayan S.M."/>
            <person name="Van Donkelaar A."/>
            <person name="Kortt A.A."/>
        </authorList>
    </citation>
    <scope>X-RAY CRYSTALLOGRAPHY (1.8 ANGSTROMS)</scope>
    <scope>DISULFIDE BOND</scope>
</reference>
<name>ALB1_PSOTE</name>
<keyword id="KW-0002">3D-structure</keyword>
<keyword id="KW-0903">Direct protein sequencing</keyword>
<keyword id="KW-1015">Disulfide bond</keyword>
<keyword id="KW-0708">Seed storage protein</keyword>
<keyword id="KW-0758">Storage protein</keyword>
<sequence>ADDPVYDAEGNKLVNRGKYTIVSFSDGAGIDVVATGNENPEDPLSIVKSTRNIMYATSISSEDKTPPQPRNILENMRLKINFATDPHKGDVWSVVDFQPDGQQLKLAGRYPNQVKGAFTIQKGSNTPRTYKLLFCPVGSPCKNIGISTDPEGKKRLVVSYQSDPLVVKFHRHEPE</sequence>
<protein>
    <recommendedName>
        <fullName>Albumin-1</fullName>
    </recommendedName>
    <alternativeName>
        <fullName>WBA-1</fullName>
    </alternativeName>
</protein>
<feature type="chain" id="PRO_0000083320" description="Albumin-1">
    <location>
        <begin position="1"/>
        <end position="175"/>
    </location>
</feature>
<feature type="disulfide bond" evidence="1">
    <location>
        <begin position="135"/>
        <end position="141"/>
    </location>
</feature>
<feature type="strand" evidence="3">
    <location>
        <begin position="17"/>
        <end position="23"/>
    </location>
</feature>
<feature type="turn" evidence="3">
    <location>
        <begin position="24"/>
        <end position="26"/>
    </location>
</feature>
<feature type="strand" evidence="3">
    <location>
        <begin position="29"/>
        <end position="33"/>
    </location>
</feature>
<feature type="strand" evidence="3">
    <location>
        <begin position="45"/>
        <end position="48"/>
    </location>
</feature>
<feature type="strand" evidence="3">
    <location>
        <begin position="50"/>
        <end position="52"/>
    </location>
</feature>
<feature type="strand" evidence="3">
    <location>
        <begin position="56"/>
        <end position="62"/>
    </location>
</feature>
<feature type="strand" evidence="3">
    <location>
        <begin position="78"/>
        <end position="82"/>
    </location>
</feature>
<feature type="strand" evidence="3">
    <location>
        <begin position="91"/>
        <end position="97"/>
    </location>
</feature>
<feature type="turn" evidence="3">
    <location>
        <begin position="98"/>
        <end position="100"/>
    </location>
</feature>
<feature type="strand" evidence="3">
    <location>
        <begin position="101"/>
        <end position="106"/>
    </location>
</feature>
<feature type="strand" evidence="3">
    <location>
        <begin position="116"/>
        <end position="122"/>
    </location>
</feature>
<feature type="strand" evidence="3">
    <location>
        <begin position="124"/>
        <end position="126"/>
    </location>
</feature>
<feature type="strand" evidence="3">
    <location>
        <begin position="130"/>
        <end position="136"/>
    </location>
</feature>
<feature type="strand" evidence="3">
    <location>
        <begin position="142"/>
        <end position="148"/>
    </location>
</feature>
<feature type="strand" evidence="3">
    <location>
        <begin position="154"/>
        <end position="159"/>
    </location>
</feature>
<feature type="strand" evidence="3">
    <location>
        <begin position="166"/>
        <end position="171"/>
    </location>
</feature>
<proteinExistence type="evidence at protein level"/>
<dbReference type="PIR" id="S04219">
    <property type="entry name" value="S04219"/>
</dbReference>
<dbReference type="PDB" id="1WBA">
    <property type="method" value="X-ray"/>
    <property type="resolution" value="1.80 A"/>
    <property type="chains" value="A=1-175"/>
</dbReference>
<dbReference type="PDBsum" id="1WBA"/>
<dbReference type="SMR" id="P15465"/>
<dbReference type="EvolutionaryTrace" id="P15465"/>
<dbReference type="GO" id="GO:0004866">
    <property type="term" value="F:endopeptidase inhibitor activity"/>
    <property type="evidence" value="ECO:0007669"/>
    <property type="project" value="InterPro"/>
</dbReference>
<dbReference type="GO" id="GO:0045735">
    <property type="term" value="F:nutrient reservoir activity"/>
    <property type="evidence" value="ECO:0007669"/>
    <property type="project" value="UniProtKB-KW"/>
</dbReference>
<dbReference type="Gene3D" id="2.80.10.50">
    <property type="match status" value="1"/>
</dbReference>
<dbReference type="InterPro" id="IPR011065">
    <property type="entry name" value="Kunitz_inhibitor_STI-like_sf"/>
</dbReference>
<dbReference type="InterPro" id="IPR002160">
    <property type="entry name" value="Prot_inh_Kunz-lg"/>
</dbReference>
<dbReference type="PANTHER" id="PTHR33107">
    <property type="entry name" value="KUNITZ TRYPSIN INHIBITOR 2"/>
    <property type="match status" value="1"/>
</dbReference>
<dbReference type="PANTHER" id="PTHR33107:SF81">
    <property type="entry name" value="TRYPSIN INHIBITOR A"/>
    <property type="match status" value="1"/>
</dbReference>
<dbReference type="Pfam" id="PF00197">
    <property type="entry name" value="Kunitz_legume"/>
    <property type="match status" value="1"/>
</dbReference>
<dbReference type="PRINTS" id="PR00291">
    <property type="entry name" value="KUNITZINHBTR"/>
</dbReference>
<dbReference type="SMART" id="SM00452">
    <property type="entry name" value="STI"/>
    <property type="match status" value="1"/>
</dbReference>
<dbReference type="SUPFAM" id="SSF50386">
    <property type="entry name" value="STI-like"/>
    <property type="match status" value="1"/>
</dbReference>
<dbReference type="PROSITE" id="PS00283">
    <property type="entry name" value="SOYBEAN_KUNITZ"/>
    <property type="match status" value="1"/>
</dbReference>
<accession>P15465</accession>
<evidence type="ECO:0000269" key="1">
    <source>
    </source>
</evidence>
<evidence type="ECO:0000305" key="2"/>
<evidence type="ECO:0007829" key="3">
    <source>
        <dbReference type="PDB" id="1WBA"/>
    </source>
</evidence>